<organism>
    <name type="scientific">Candida glabrata (strain ATCC 2001 / BCRC 20586 / JCM 3761 / NBRC 0622 / NRRL Y-65 / CBS 138)</name>
    <name type="common">Yeast</name>
    <name type="synonym">Nakaseomyces glabratus</name>
    <dbReference type="NCBI Taxonomy" id="284593"/>
    <lineage>
        <taxon>Eukaryota</taxon>
        <taxon>Fungi</taxon>
        <taxon>Dikarya</taxon>
        <taxon>Ascomycota</taxon>
        <taxon>Saccharomycotina</taxon>
        <taxon>Saccharomycetes</taxon>
        <taxon>Saccharomycetales</taxon>
        <taxon>Saccharomycetaceae</taxon>
        <taxon>Nakaseomyces</taxon>
    </lineage>
</organism>
<gene>
    <name type="primary">CSN12</name>
    <name type="ordered locus">CAGL0M09251g</name>
</gene>
<name>CSN12_CANGA</name>
<proteinExistence type="inferred from homology"/>
<keyword id="KW-0963">Cytoplasm</keyword>
<keyword id="KW-0539">Nucleus</keyword>
<keyword id="KW-1185">Reference proteome</keyword>
<keyword id="KW-0736">Signalosome</keyword>
<feature type="chain" id="PRO_0000121038" description="COP9 signalosome complex subunit 12">
    <location>
        <begin position="1"/>
        <end position="449"/>
    </location>
</feature>
<feature type="domain" description="PCI" evidence="2">
    <location>
        <begin position="233"/>
        <end position="444"/>
    </location>
</feature>
<sequence length="449" mass="52648">MEYSRFVDCFERRSYTAEFLEFVGFKLSSEPLGATALILGGSQAKQARYGDVNALYDAIVQIKLKESLTSLRELDPNAAVKKNKQRKVHQRVVDVFQALTNELRILNKILERSDDSVWLVYPVYTVCHDVSTFLRDTGKYMQLESRKQLWEECIRVIHRSFMICLNDKNPNMQENKRGGCILFANLEMMFYKMLRNRDMMKNLIKVLESTGMTDISRQRDNKVLKRHRSQKIIFNYFIGEYYGCYLFQFNKAQEHLQVCVSEFPVKYTSSKWFKRIIHLYTQFRMLATSNKLIHVELPRETNEKFANAYDSDLMNKCYKNGDTIVFDELIKEHAAQYLIDGTYSAMLLIKELVFLRLVKVCYKVNDKKSILPLDLIAAGYRIHFRNHDNEENRVTTTNPRKLQKKNEDLLDELECRIANLIANGRIKGYLSHSQRCMVLSKTEPFPLAS</sequence>
<reference key="1">
    <citation type="journal article" date="2004" name="Nature">
        <title>Genome evolution in yeasts.</title>
        <authorList>
            <person name="Dujon B."/>
            <person name="Sherman D."/>
            <person name="Fischer G."/>
            <person name="Durrens P."/>
            <person name="Casaregola S."/>
            <person name="Lafontaine I."/>
            <person name="de Montigny J."/>
            <person name="Marck C."/>
            <person name="Neuveglise C."/>
            <person name="Talla E."/>
            <person name="Goffard N."/>
            <person name="Frangeul L."/>
            <person name="Aigle M."/>
            <person name="Anthouard V."/>
            <person name="Babour A."/>
            <person name="Barbe V."/>
            <person name="Barnay S."/>
            <person name="Blanchin S."/>
            <person name="Beckerich J.-M."/>
            <person name="Beyne E."/>
            <person name="Bleykasten C."/>
            <person name="Boisrame A."/>
            <person name="Boyer J."/>
            <person name="Cattolico L."/>
            <person name="Confanioleri F."/>
            <person name="de Daruvar A."/>
            <person name="Despons L."/>
            <person name="Fabre E."/>
            <person name="Fairhead C."/>
            <person name="Ferry-Dumazet H."/>
            <person name="Groppi A."/>
            <person name="Hantraye F."/>
            <person name="Hennequin C."/>
            <person name="Jauniaux N."/>
            <person name="Joyet P."/>
            <person name="Kachouri R."/>
            <person name="Kerrest A."/>
            <person name="Koszul R."/>
            <person name="Lemaire M."/>
            <person name="Lesur I."/>
            <person name="Ma L."/>
            <person name="Muller H."/>
            <person name="Nicaud J.-M."/>
            <person name="Nikolski M."/>
            <person name="Oztas S."/>
            <person name="Ozier-Kalogeropoulos O."/>
            <person name="Pellenz S."/>
            <person name="Potier S."/>
            <person name="Richard G.-F."/>
            <person name="Straub M.-L."/>
            <person name="Suleau A."/>
            <person name="Swennen D."/>
            <person name="Tekaia F."/>
            <person name="Wesolowski-Louvel M."/>
            <person name="Westhof E."/>
            <person name="Wirth B."/>
            <person name="Zeniou-Meyer M."/>
            <person name="Zivanovic Y."/>
            <person name="Bolotin-Fukuhara M."/>
            <person name="Thierry A."/>
            <person name="Bouchier C."/>
            <person name="Caudron B."/>
            <person name="Scarpelli C."/>
            <person name="Gaillardin C."/>
            <person name="Weissenbach J."/>
            <person name="Wincker P."/>
            <person name="Souciet J.-L."/>
        </authorList>
    </citation>
    <scope>NUCLEOTIDE SEQUENCE [LARGE SCALE GENOMIC DNA]</scope>
    <source>
        <strain>ATCC 2001 / BCRC 20586 / JCM 3761 / NBRC 0622 / NRRL Y-65 / CBS 138</strain>
    </source>
</reference>
<protein>
    <recommendedName>
        <fullName>COP9 signalosome complex subunit 12</fullName>
    </recommendedName>
</protein>
<comment type="function">
    <text evidence="1">Component of the COP9 signalosome (CSN) complex that acts as an regulator of the ubiquitin (Ubl) conjugation pathway by mediating the deneddylation of the cullin subunit of SCF-type E3 ubiquitin-protein ligase complexes. The CSN complex is involved in the regulation of the mating pheromone response (By similarity).</text>
</comment>
<comment type="subunit">
    <text>Component of a COP9 signalosome-like (CSN) complex.</text>
</comment>
<comment type="subcellular location">
    <subcellularLocation>
        <location evidence="1">Cytoplasm</location>
    </subcellularLocation>
    <subcellularLocation>
        <location evidence="1">Nucleus</location>
    </subcellularLocation>
</comment>
<comment type="similarity">
    <text evidence="3">Belongs to the CSN12 family.</text>
</comment>
<accession>Q6FJ48</accession>
<evidence type="ECO:0000250" key="1"/>
<evidence type="ECO:0000255" key="2">
    <source>
        <dbReference type="PROSITE-ProRule" id="PRU01185"/>
    </source>
</evidence>
<evidence type="ECO:0000305" key="3"/>
<dbReference type="EMBL" id="CR380959">
    <property type="protein sequence ID" value="CAG62724.1"/>
    <property type="molecule type" value="Genomic_DNA"/>
</dbReference>
<dbReference type="RefSeq" id="XP_449746.1">
    <property type="nucleotide sequence ID" value="XM_449746.1"/>
</dbReference>
<dbReference type="SMR" id="Q6FJ48"/>
<dbReference type="FunCoup" id="Q6FJ48">
    <property type="interactions" value="980"/>
</dbReference>
<dbReference type="STRING" id="284593.Q6FJ48"/>
<dbReference type="EnsemblFungi" id="CAGL0M09251g-T">
    <property type="protein sequence ID" value="CAGL0M09251g-T-p1"/>
    <property type="gene ID" value="CAGL0M09251g"/>
</dbReference>
<dbReference type="KEGG" id="cgr:2891310"/>
<dbReference type="CGD" id="CAL0136487">
    <property type="gene designation" value="CAGL0M09251g"/>
</dbReference>
<dbReference type="VEuPathDB" id="FungiDB:B1J91_M09251g"/>
<dbReference type="VEuPathDB" id="FungiDB:CAGL0M09251g"/>
<dbReference type="eggNOG" id="KOG2688">
    <property type="taxonomic scope" value="Eukaryota"/>
</dbReference>
<dbReference type="HOGENOM" id="CLU_031567_2_1_1"/>
<dbReference type="InParanoid" id="Q6FJ48"/>
<dbReference type="OMA" id="ESQTNWI"/>
<dbReference type="Proteomes" id="UP000002428">
    <property type="component" value="Chromosome M"/>
</dbReference>
<dbReference type="GO" id="GO:0008180">
    <property type="term" value="C:COP9 signalosome"/>
    <property type="evidence" value="ECO:0007669"/>
    <property type="project" value="UniProtKB-KW"/>
</dbReference>
<dbReference type="GO" id="GO:0005737">
    <property type="term" value="C:cytoplasm"/>
    <property type="evidence" value="ECO:0007669"/>
    <property type="project" value="UniProtKB-SubCell"/>
</dbReference>
<dbReference type="GO" id="GO:0003690">
    <property type="term" value="F:double-stranded DNA binding"/>
    <property type="evidence" value="ECO:0007669"/>
    <property type="project" value="InterPro"/>
</dbReference>
<dbReference type="GO" id="GO:0003723">
    <property type="term" value="F:RNA binding"/>
    <property type="evidence" value="ECO:0007669"/>
    <property type="project" value="InterPro"/>
</dbReference>
<dbReference type="Gene3D" id="1.10.10.10">
    <property type="entry name" value="Winged helix-like DNA-binding domain superfamily/Winged helix DNA-binding domain"/>
    <property type="match status" value="1"/>
</dbReference>
<dbReference type="InterPro" id="IPR045114">
    <property type="entry name" value="Csn12-like"/>
</dbReference>
<dbReference type="InterPro" id="IPR000717">
    <property type="entry name" value="PCI_dom"/>
</dbReference>
<dbReference type="InterPro" id="IPR036388">
    <property type="entry name" value="WH-like_DNA-bd_sf"/>
</dbReference>
<dbReference type="PANTHER" id="PTHR12732:SF0">
    <property type="entry name" value="PCI DOMAIN-CONTAINING PROTEIN 2"/>
    <property type="match status" value="1"/>
</dbReference>
<dbReference type="PANTHER" id="PTHR12732">
    <property type="entry name" value="UNCHARACTERIZED PROTEASOME COMPONENT REGION PCI-CONTAINING"/>
    <property type="match status" value="1"/>
</dbReference>
<dbReference type="Pfam" id="PF01399">
    <property type="entry name" value="PCI"/>
    <property type="match status" value="1"/>
</dbReference>
<dbReference type="PROSITE" id="PS50250">
    <property type="entry name" value="PCI"/>
    <property type="match status" value="1"/>
</dbReference>